<dbReference type="EC" id="6.1.1.15" evidence="1"/>
<dbReference type="EMBL" id="BX842654">
    <property type="protein sequence ID" value="CAE80801.1"/>
    <property type="molecule type" value="Genomic_DNA"/>
</dbReference>
<dbReference type="RefSeq" id="WP_011165405.1">
    <property type="nucleotide sequence ID" value="NC_005363.1"/>
</dbReference>
<dbReference type="SMR" id="Q6MIW2"/>
<dbReference type="STRING" id="264462.Bd3033"/>
<dbReference type="GeneID" id="93013895"/>
<dbReference type="KEGG" id="bba:Bd3033"/>
<dbReference type="eggNOG" id="COG0442">
    <property type="taxonomic scope" value="Bacteria"/>
</dbReference>
<dbReference type="HOGENOM" id="CLU_001882_4_2_7"/>
<dbReference type="Proteomes" id="UP000008080">
    <property type="component" value="Chromosome"/>
</dbReference>
<dbReference type="GO" id="GO:0017101">
    <property type="term" value="C:aminoacyl-tRNA synthetase multienzyme complex"/>
    <property type="evidence" value="ECO:0007669"/>
    <property type="project" value="TreeGrafter"/>
</dbReference>
<dbReference type="GO" id="GO:0005737">
    <property type="term" value="C:cytoplasm"/>
    <property type="evidence" value="ECO:0007669"/>
    <property type="project" value="UniProtKB-SubCell"/>
</dbReference>
<dbReference type="GO" id="GO:0005524">
    <property type="term" value="F:ATP binding"/>
    <property type="evidence" value="ECO:0007669"/>
    <property type="project" value="UniProtKB-UniRule"/>
</dbReference>
<dbReference type="GO" id="GO:0004827">
    <property type="term" value="F:proline-tRNA ligase activity"/>
    <property type="evidence" value="ECO:0007669"/>
    <property type="project" value="UniProtKB-UniRule"/>
</dbReference>
<dbReference type="GO" id="GO:0006433">
    <property type="term" value="P:prolyl-tRNA aminoacylation"/>
    <property type="evidence" value="ECO:0007669"/>
    <property type="project" value="UniProtKB-UniRule"/>
</dbReference>
<dbReference type="CDD" id="cd00778">
    <property type="entry name" value="ProRS_core_arch_euk"/>
    <property type="match status" value="1"/>
</dbReference>
<dbReference type="FunFam" id="3.30.930.10:FF:000023">
    <property type="entry name" value="Proline--tRNA ligase"/>
    <property type="match status" value="1"/>
</dbReference>
<dbReference type="Gene3D" id="3.40.50.800">
    <property type="entry name" value="Anticodon-binding domain"/>
    <property type="match status" value="1"/>
</dbReference>
<dbReference type="Gene3D" id="3.30.930.10">
    <property type="entry name" value="Bira Bifunctional Protein, Domain 2"/>
    <property type="match status" value="1"/>
</dbReference>
<dbReference type="Gene3D" id="3.30.110.30">
    <property type="entry name" value="C-terminal domain of ProRS"/>
    <property type="match status" value="1"/>
</dbReference>
<dbReference type="HAMAP" id="MF_01571">
    <property type="entry name" value="Pro_tRNA_synth_type3"/>
    <property type="match status" value="1"/>
</dbReference>
<dbReference type="InterPro" id="IPR002314">
    <property type="entry name" value="aa-tRNA-synt_IIb"/>
</dbReference>
<dbReference type="InterPro" id="IPR006195">
    <property type="entry name" value="aa-tRNA-synth_II"/>
</dbReference>
<dbReference type="InterPro" id="IPR045864">
    <property type="entry name" value="aa-tRNA-synth_II/BPL/LPL"/>
</dbReference>
<dbReference type="InterPro" id="IPR004154">
    <property type="entry name" value="Anticodon-bd"/>
</dbReference>
<dbReference type="InterPro" id="IPR036621">
    <property type="entry name" value="Anticodon-bd_dom_sf"/>
</dbReference>
<dbReference type="InterPro" id="IPR004499">
    <property type="entry name" value="Pro-tRNA-ligase_IIa_arc-type"/>
</dbReference>
<dbReference type="InterPro" id="IPR016061">
    <property type="entry name" value="Pro-tRNA_ligase_II_C"/>
</dbReference>
<dbReference type="InterPro" id="IPR017449">
    <property type="entry name" value="Pro-tRNA_synth_II"/>
</dbReference>
<dbReference type="InterPro" id="IPR033721">
    <property type="entry name" value="ProRS_core_arch_euk"/>
</dbReference>
<dbReference type="NCBIfam" id="TIGR00408">
    <property type="entry name" value="proS_fam_I"/>
    <property type="match status" value="1"/>
</dbReference>
<dbReference type="PANTHER" id="PTHR43382:SF2">
    <property type="entry name" value="BIFUNCTIONAL GLUTAMATE_PROLINE--TRNA LIGASE"/>
    <property type="match status" value="1"/>
</dbReference>
<dbReference type="PANTHER" id="PTHR43382">
    <property type="entry name" value="PROLYL-TRNA SYNTHETASE"/>
    <property type="match status" value="1"/>
</dbReference>
<dbReference type="Pfam" id="PF03129">
    <property type="entry name" value="HGTP_anticodon"/>
    <property type="match status" value="1"/>
</dbReference>
<dbReference type="Pfam" id="PF09180">
    <property type="entry name" value="ProRS-C_1"/>
    <property type="match status" value="1"/>
</dbReference>
<dbReference type="Pfam" id="PF00587">
    <property type="entry name" value="tRNA-synt_2b"/>
    <property type="match status" value="1"/>
</dbReference>
<dbReference type="SMART" id="SM00946">
    <property type="entry name" value="ProRS-C_1"/>
    <property type="match status" value="1"/>
</dbReference>
<dbReference type="SUPFAM" id="SSF64586">
    <property type="entry name" value="C-terminal domain of ProRS"/>
    <property type="match status" value="1"/>
</dbReference>
<dbReference type="SUPFAM" id="SSF52954">
    <property type="entry name" value="Class II aaRS ABD-related"/>
    <property type="match status" value="1"/>
</dbReference>
<dbReference type="SUPFAM" id="SSF55681">
    <property type="entry name" value="Class II aaRS and biotin synthetases"/>
    <property type="match status" value="1"/>
</dbReference>
<dbReference type="PROSITE" id="PS50862">
    <property type="entry name" value="AA_TRNA_LIGASE_II"/>
    <property type="match status" value="1"/>
</dbReference>
<sequence length="499" mass="56596">MADTAITPTRSQNYPEWYQQVIVAADMAENSPVRGCMVIKPWGYAVWENMQGVLDRMFKDTGHVNAYFPLLIPLSFLEKEAAHVEGFAKECAVVTHHRLKGDGNGKLIPDGELEEPLIIRPTSETIIGHQFAKWVKSYRDLPILVNQWCNVMRWEMRTRMFLRTAEFLWQEGHTVHATAKEAQEETLQMLNVYSEFAEQYMAMPVIKGMKTPDERFPGAVDTYTIEALMQDKKALQAGTSHFLGQNFAKASEIKYLSAEGKEEFAWTTSWGVSTRLIGGLIMTHSDDNGFVVPPRLAPLHVVIIPIYRNDEERAQVLDYVKALEKDLKAQNYVGSSVRVKIDDRDMRGGEKAWQYIKQGVPVRVEVGPRDMAKGEVFVGRRDRGPKEKASMERNAFVANITNLLQEMQDGLFERAKQMRDESIKTITNLQDFEKYFSGGENTAPGFAKVPWCEAGMGHELLAQLKVTPRCMPLDQEPVQGNCIFSGKPATKWVLFAKSY</sequence>
<name>SYP_BDEBA</name>
<gene>
    <name evidence="1" type="primary">proS</name>
    <name type="ordered locus">Bd3033</name>
</gene>
<accession>Q6MIW2</accession>
<protein>
    <recommendedName>
        <fullName evidence="1">Proline--tRNA ligase</fullName>
        <ecNumber evidence="1">6.1.1.15</ecNumber>
    </recommendedName>
    <alternativeName>
        <fullName evidence="1">Prolyl-tRNA synthetase</fullName>
        <shortName evidence="1">ProRS</shortName>
    </alternativeName>
</protein>
<feature type="chain" id="PRO_0000249124" description="Proline--tRNA ligase">
    <location>
        <begin position="1"/>
        <end position="499"/>
    </location>
</feature>
<comment type="function">
    <text evidence="1">Catalyzes the attachment of proline to tRNA(Pro) in a two-step reaction: proline is first activated by ATP to form Pro-AMP and then transferred to the acceptor end of tRNA(Pro).</text>
</comment>
<comment type="catalytic activity">
    <reaction evidence="1">
        <text>tRNA(Pro) + L-proline + ATP = L-prolyl-tRNA(Pro) + AMP + diphosphate</text>
        <dbReference type="Rhea" id="RHEA:14305"/>
        <dbReference type="Rhea" id="RHEA-COMP:9700"/>
        <dbReference type="Rhea" id="RHEA-COMP:9702"/>
        <dbReference type="ChEBI" id="CHEBI:30616"/>
        <dbReference type="ChEBI" id="CHEBI:33019"/>
        <dbReference type="ChEBI" id="CHEBI:60039"/>
        <dbReference type="ChEBI" id="CHEBI:78442"/>
        <dbReference type="ChEBI" id="CHEBI:78532"/>
        <dbReference type="ChEBI" id="CHEBI:456215"/>
        <dbReference type="EC" id="6.1.1.15"/>
    </reaction>
</comment>
<comment type="subunit">
    <text evidence="1">Homodimer.</text>
</comment>
<comment type="subcellular location">
    <subcellularLocation>
        <location evidence="1">Cytoplasm</location>
    </subcellularLocation>
</comment>
<comment type="domain">
    <text evidence="1">Consists of three domains: the N-terminal catalytic domain, the anticodon-binding domain and the C-terminal extension.</text>
</comment>
<comment type="similarity">
    <text evidence="1">Belongs to the class-II aminoacyl-tRNA synthetase family. ProS type 3 subfamily.</text>
</comment>
<organism>
    <name type="scientific">Bdellovibrio bacteriovorus (strain ATCC 15356 / DSM 50701 / NCIMB 9529 / HD100)</name>
    <dbReference type="NCBI Taxonomy" id="264462"/>
    <lineage>
        <taxon>Bacteria</taxon>
        <taxon>Pseudomonadati</taxon>
        <taxon>Bdellovibrionota</taxon>
        <taxon>Bdellovibrionia</taxon>
        <taxon>Bdellovibrionales</taxon>
        <taxon>Pseudobdellovibrionaceae</taxon>
        <taxon>Bdellovibrio</taxon>
    </lineage>
</organism>
<keyword id="KW-0030">Aminoacyl-tRNA synthetase</keyword>
<keyword id="KW-0067">ATP-binding</keyword>
<keyword id="KW-0963">Cytoplasm</keyword>
<keyword id="KW-0436">Ligase</keyword>
<keyword id="KW-0547">Nucleotide-binding</keyword>
<keyword id="KW-0648">Protein biosynthesis</keyword>
<keyword id="KW-1185">Reference proteome</keyword>
<evidence type="ECO:0000255" key="1">
    <source>
        <dbReference type="HAMAP-Rule" id="MF_01571"/>
    </source>
</evidence>
<proteinExistence type="inferred from homology"/>
<reference key="1">
    <citation type="journal article" date="2004" name="Science">
        <title>A predator unmasked: life cycle of Bdellovibrio bacteriovorus from a genomic perspective.</title>
        <authorList>
            <person name="Rendulic S."/>
            <person name="Jagtap P."/>
            <person name="Rosinus A."/>
            <person name="Eppinger M."/>
            <person name="Baar C."/>
            <person name="Lanz C."/>
            <person name="Keller H."/>
            <person name="Lambert C."/>
            <person name="Evans K.J."/>
            <person name="Goesmann A."/>
            <person name="Meyer F."/>
            <person name="Sockett R.E."/>
            <person name="Schuster S.C."/>
        </authorList>
    </citation>
    <scope>NUCLEOTIDE SEQUENCE [LARGE SCALE GENOMIC DNA]</scope>
    <source>
        <strain>ATCC 15356 / DSM 50701 / NCIMB 9529 / HD100</strain>
    </source>
</reference>